<name>BCAS3_MOUSE</name>
<accession>Q8CCN5</accession>
<accession>Q8CC16</accession>
<accession>Q9EPX3</accession>
<reference key="1">
    <citation type="journal article" date="2005" name="Science">
        <title>The transcriptional landscape of the mammalian genome.</title>
        <authorList>
            <person name="Carninci P."/>
            <person name="Kasukawa T."/>
            <person name="Katayama S."/>
            <person name="Gough J."/>
            <person name="Frith M.C."/>
            <person name="Maeda N."/>
            <person name="Oyama R."/>
            <person name="Ravasi T."/>
            <person name="Lenhard B."/>
            <person name="Wells C."/>
            <person name="Kodzius R."/>
            <person name="Shimokawa K."/>
            <person name="Bajic V.B."/>
            <person name="Brenner S.E."/>
            <person name="Batalov S."/>
            <person name="Forrest A.R."/>
            <person name="Zavolan M."/>
            <person name="Davis M.J."/>
            <person name="Wilming L.G."/>
            <person name="Aidinis V."/>
            <person name="Allen J.E."/>
            <person name="Ambesi-Impiombato A."/>
            <person name="Apweiler R."/>
            <person name="Aturaliya R.N."/>
            <person name="Bailey T.L."/>
            <person name="Bansal M."/>
            <person name="Baxter L."/>
            <person name="Beisel K.W."/>
            <person name="Bersano T."/>
            <person name="Bono H."/>
            <person name="Chalk A.M."/>
            <person name="Chiu K.P."/>
            <person name="Choudhary V."/>
            <person name="Christoffels A."/>
            <person name="Clutterbuck D.R."/>
            <person name="Crowe M.L."/>
            <person name="Dalla E."/>
            <person name="Dalrymple B.P."/>
            <person name="de Bono B."/>
            <person name="Della Gatta G."/>
            <person name="di Bernardo D."/>
            <person name="Down T."/>
            <person name="Engstrom P."/>
            <person name="Fagiolini M."/>
            <person name="Faulkner G."/>
            <person name="Fletcher C.F."/>
            <person name="Fukushima T."/>
            <person name="Furuno M."/>
            <person name="Futaki S."/>
            <person name="Gariboldi M."/>
            <person name="Georgii-Hemming P."/>
            <person name="Gingeras T.R."/>
            <person name="Gojobori T."/>
            <person name="Green R.E."/>
            <person name="Gustincich S."/>
            <person name="Harbers M."/>
            <person name="Hayashi Y."/>
            <person name="Hensch T.K."/>
            <person name="Hirokawa N."/>
            <person name="Hill D."/>
            <person name="Huminiecki L."/>
            <person name="Iacono M."/>
            <person name="Ikeo K."/>
            <person name="Iwama A."/>
            <person name="Ishikawa T."/>
            <person name="Jakt M."/>
            <person name="Kanapin A."/>
            <person name="Katoh M."/>
            <person name="Kawasawa Y."/>
            <person name="Kelso J."/>
            <person name="Kitamura H."/>
            <person name="Kitano H."/>
            <person name="Kollias G."/>
            <person name="Krishnan S.P."/>
            <person name="Kruger A."/>
            <person name="Kummerfeld S.K."/>
            <person name="Kurochkin I.V."/>
            <person name="Lareau L.F."/>
            <person name="Lazarevic D."/>
            <person name="Lipovich L."/>
            <person name="Liu J."/>
            <person name="Liuni S."/>
            <person name="McWilliam S."/>
            <person name="Madan Babu M."/>
            <person name="Madera M."/>
            <person name="Marchionni L."/>
            <person name="Matsuda H."/>
            <person name="Matsuzawa S."/>
            <person name="Miki H."/>
            <person name="Mignone F."/>
            <person name="Miyake S."/>
            <person name="Morris K."/>
            <person name="Mottagui-Tabar S."/>
            <person name="Mulder N."/>
            <person name="Nakano N."/>
            <person name="Nakauchi H."/>
            <person name="Ng P."/>
            <person name="Nilsson R."/>
            <person name="Nishiguchi S."/>
            <person name="Nishikawa S."/>
            <person name="Nori F."/>
            <person name="Ohara O."/>
            <person name="Okazaki Y."/>
            <person name="Orlando V."/>
            <person name="Pang K.C."/>
            <person name="Pavan W.J."/>
            <person name="Pavesi G."/>
            <person name="Pesole G."/>
            <person name="Petrovsky N."/>
            <person name="Piazza S."/>
            <person name="Reed J."/>
            <person name="Reid J.F."/>
            <person name="Ring B.Z."/>
            <person name="Ringwald M."/>
            <person name="Rost B."/>
            <person name="Ruan Y."/>
            <person name="Salzberg S.L."/>
            <person name="Sandelin A."/>
            <person name="Schneider C."/>
            <person name="Schoenbach C."/>
            <person name="Sekiguchi K."/>
            <person name="Semple C.A."/>
            <person name="Seno S."/>
            <person name="Sessa L."/>
            <person name="Sheng Y."/>
            <person name="Shibata Y."/>
            <person name="Shimada H."/>
            <person name="Shimada K."/>
            <person name="Silva D."/>
            <person name="Sinclair B."/>
            <person name="Sperling S."/>
            <person name="Stupka E."/>
            <person name="Sugiura K."/>
            <person name="Sultana R."/>
            <person name="Takenaka Y."/>
            <person name="Taki K."/>
            <person name="Tammoja K."/>
            <person name="Tan S.L."/>
            <person name="Tang S."/>
            <person name="Taylor M.S."/>
            <person name="Tegner J."/>
            <person name="Teichmann S.A."/>
            <person name="Ueda H.R."/>
            <person name="van Nimwegen E."/>
            <person name="Verardo R."/>
            <person name="Wei C.L."/>
            <person name="Yagi K."/>
            <person name="Yamanishi H."/>
            <person name="Zabarovsky E."/>
            <person name="Zhu S."/>
            <person name="Zimmer A."/>
            <person name="Hide W."/>
            <person name="Bult C."/>
            <person name="Grimmond S.M."/>
            <person name="Teasdale R.D."/>
            <person name="Liu E.T."/>
            <person name="Brusic V."/>
            <person name="Quackenbush J."/>
            <person name="Wahlestedt C."/>
            <person name="Mattick J.S."/>
            <person name="Hume D.A."/>
            <person name="Kai C."/>
            <person name="Sasaki D."/>
            <person name="Tomaru Y."/>
            <person name="Fukuda S."/>
            <person name="Kanamori-Katayama M."/>
            <person name="Suzuki M."/>
            <person name="Aoki J."/>
            <person name="Arakawa T."/>
            <person name="Iida J."/>
            <person name="Imamura K."/>
            <person name="Itoh M."/>
            <person name="Kato T."/>
            <person name="Kawaji H."/>
            <person name="Kawagashira N."/>
            <person name="Kawashima T."/>
            <person name="Kojima M."/>
            <person name="Kondo S."/>
            <person name="Konno H."/>
            <person name="Nakano K."/>
            <person name="Ninomiya N."/>
            <person name="Nishio T."/>
            <person name="Okada M."/>
            <person name="Plessy C."/>
            <person name="Shibata K."/>
            <person name="Shiraki T."/>
            <person name="Suzuki S."/>
            <person name="Tagami M."/>
            <person name="Waki K."/>
            <person name="Watahiki A."/>
            <person name="Okamura-Oho Y."/>
            <person name="Suzuki H."/>
            <person name="Kawai J."/>
            <person name="Hayashizaki Y."/>
        </authorList>
    </citation>
    <scope>NUCLEOTIDE SEQUENCE [LARGE SCALE MRNA] (ISOFORMS 1 AND 2)</scope>
    <source>
        <strain>C57BL/6J</strain>
        <tissue>Diencephalon</tissue>
        <tissue>Olfactory bulb</tissue>
    </source>
</reference>
<reference key="2">
    <citation type="journal article" date="2006" name="Gene Expr. Patterns">
        <title>Rudhira is a cytoplasmic WD40 protein expressed in mouse embryonic stem cells and during embryonic erythropoiesis.</title>
        <authorList>
            <person name="Siva K."/>
            <person name="Inamdar M.S."/>
        </authorList>
    </citation>
    <scope>NUCLEOTIDE SEQUENCE [MRNA] OF 1-477 (ISOFORM 1)</scope>
    <scope>SUBCELLULAR LOCATION</scope>
    <scope>TISSUE SPECIFICITY</scope>
    <scope>DEVELOPMENTAL STAGE</scope>
    <scope>DOMAIN</scope>
</reference>
<reference key="3">
    <citation type="journal article" date="2006" name="Proc. Natl. Acad. Sci. U.S.A.">
        <title>MTA1, a transcriptional activator of breast cancer amplified sequence 3.</title>
        <authorList>
            <person name="Gururaj A.E."/>
            <person name="Singh R.R."/>
            <person name="Rayala S.K."/>
            <person name="Holm C."/>
            <person name="den Hollander P."/>
            <person name="Zhang H."/>
            <person name="Balasenthil S."/>
            <person name="Talukder A.H."/>
            <person name="Landberg G."/>
            <person name="Kumar R."/>
        </authorList>
    </citation>
    <scope>TISSUE SPECIFICITY</scope>
</reference>
<reference key="4">
    <citation type="journal article" date="2013" name="Proc. Natl. Acad. Sci. U.S.A.">
        <authorList>
            <person name="Gururaj A.E."/>
            <person name="Singh R.R."/>
            <person name="Rayala S.K."/>
            <person name="Holm C."/>
            <person name="den Hollander P."/>
            <person name="Zhang H."/>
            <person name="Balasenthil S."/>
            <person name="Talukder A.H."/>
            <person name="Landberg G."/>
            <person name="Kumar R."/>
        </authorList>
    </citation>
    <scope>ERRATUM OF PUBMED:16617102</scope>
</reference>
<reference key="5">
    <citation type="journal article" date="2007" name="Mol. Endocrinol.">
        <title>Estrogen induces expression of BCAS3, a novel estrogen receptor-alpha coactivator, through proline-, glutamic acid-, and leucine-rich protein-1 (PELP1).</title>
        <authorList>
            <person name="Gururaj A.E."/>
            <person name="Peng S."/>
            <person name="Vadlamudi R.K."/>
            <person name="Kumar R."/>
        </authorList>
    </citation>
    <scope>INDUCTION</scope>
    <scope>CHROMATIN-BINDING</scope>
</reference>
<reference key="6">
    <citation type="journal article" date="2007" name="Proc. Natl. Acad. Sci. U.S.A.">
        <title>Large-scale phosphorylation analysis of mouse liver.</title>
        <authorList>
            <person name="Villen J."/>
            <person name="Beausoleil S.A."/>
            <person name="Gerber S.A."/>
            <person name="Gygi S.P."/>
        </authorList>
    </citation>
    <scope>PHOSPHORYLATION [LARGE SCALE ANALYSIS] AT SER-480</scope>
    <scope>IDENTIFICATION BY MASS SPECTROMETRY [LARGE SCALE ANALYSIS]</scope>
    <source>
        <tissue>Liver</tissue>
    </source>
</reference>
<reference key="7">
    <citation type="journal article" date="2010" name="Cell">
        <title>A tissue-specific atlas of mouse protein phosphorylation and expression.</title>
        <authorList>
            <person name="Huttlin E.L."/>
            <person name="Jedrychowski M.P."/>
            <person name="Elias J.E."/>
            <person name="Goswami T."/>
            <person name="Rad R."/>
            <person name="Beausoleil S.A."/>
            <person name="Villen J."/>
            <person name="Haas W."/>
            <person name="Sowa M.E."/>
            <person name="Gygi S.P."/>
        </authorList>
    </citation>
    <scope>PHOSPHORYLATION [LARGE SCALE ANALYSIS] AT SER-461; SER-480; SER-488; SER-838; SER-886 AND SER-898</scope>
    <scope>IDENTIFICATION BY MASS SPECTROMETRY [LARGE SCALE ANALYSIS]</scope>
    <source>
        <tissue>Brain</tissue>
        <tissue>Brown adipose tissue</tissue>
        <tissue>Heart</tissue>
        <tissue>Kidney</tissue>
        <tissue>Liver</tissue>
        <tissue>Lung</tissue>
        <tissue>Pancreas</tissue>
        <tissue>Spleen</tissue>
        <tissue>Testis</tissue>
    </source>
</reference>
<reference key="8">
    <citation type="journal article" date="2012" name="Exp. Cell Res.">
        <title>Rudhira/BCAS3 is a cytoskeletal protein that controls Cdc42 activation and directional cell migration during angiogenesis.</title>
        <authorList>
            <person name="Jain M."/>
            <person name="Bhat G.P."/>
            <person name="Vijayra havan K."/>
            <person name="Inamdar M.S."/>
        </authorList>
    </citation>
    <scope>FUNCTION</scope>
    <scope>SUBCELLULAR LOCATION</scope>
</reference>
<feature type="chain" id="PRO_0000050884" description="BCAS3 microtubule associated cell migration factor">
    <location>
        <begin position="1"/>
        <end position="928"/>
    </location>
</feature>
<feature type="region of interest" description="Required for recruitment to preautophagosomal structure in response to mitophagy" evidence="1">
    <location>
        <begin position="254"/>
        <end position="312"/>
    </location>
</feature>
<feature type="region of interest" description="Required for recruitment to preautophagosomal structure in response to mitophagy" evidence="1">
    <location>
        <begin position="437"/>
        <end position="560"/>
    </location>
</feature>
<feature type="region of interest" description="Disordered" evidence="2">
    <location>
        <begin position="472"/>
        <end position="518"/>
    </location>
</feature>
<feature type="region of interest" description="Disordered" evidence="2">
    <location>
        <begin position="795"/>
        <end position="816"/>
    </location>
</feature>
<feature type="region of interest" description="Disordered" evidence="2">
    <location>
        <begin position="868"/>
        <end position="928"/>
    </location>
</feature>
<feature type="compositionally biased region" description="Low complexity" evidence="2">
    <location>
        <begin position="480"/>
        <end position="494"/>
    </location>
</feature>
<feature type="compositionally biased region" description="Low complexity" evidence="2">
    <location>
        <begin position="505"/>
        <end position="514"/>
    </location>
</feature>
<feature type="compositionally biased region" description="Low complexity" evidence="2">
    <location>
        <begin position="887"/>
        <end position="901"/>
    </location>
</feature>
<feature type="modified residue" description="N-acetylmethionine" evidence="1">
    <location>
        <position position="1"/>
    </location>
</feature>
<feature type="modified residue" description="Phosphoserine" evidence="13">
    <location>
        <position position="461"/>
    </location>
</feature>
<feature type="modified residue" description="Phosphoserine" evidence="12 13">
    <location>
        <position position="480"/>
    </location>
</feature>
<feature type="modified residue" description="Phosphoserine" evidence="13">
    <location>
        <position position="488"/>
    </location>
</feature>
<feature type="modified residue" description="Phosphoserine" evidence="13">
    <location>
        <position position="838"/>
    </location>
</feature>
<feature type="modified residue" description="Phosphoserine" evidence="13">
    <location>
        <position position="886"/>
    </location>
</feature>
<feature type="modified residue" description="Phosphoserine" evidence="13">
    <location>
        <position position="898"/>
    </location>
</feature>
<feature type="cross-link" description="Glycyl lysine isopeptide (Lys-Gly) (interchain with G-Cter in SUMO1); alternate" evidence="1">
    <location>
        <position position="215"/>
    </location>
</feature>
<feature type="cross-link" description="Glycyl lysine isopeptide (Lys-Gly) (interchain with G-Cter in SUMO2); alternate" evidence="1">
    <location>
        <position position="215"/>
    </location>
</feature>
<feature type="splice variant" id="VSP_007861" description="In isoform 2." evidence="4">
    <original>LTSQDSYNNFTNNNPGNPRLSPLPSLMVVT</original>
    <variation>HFPLMLLSSRFLLYHLGSDANFYSVCAEHS</variation>
    <location>
        <begin position="498"/>
        <end position="527"/>
    </location>
</feature>
<feature type="splice variant" id="VSP_007862" description="In isoform 2." evidence="4">
    <location>
        <begin position="528"/>
        <end position="928"/>
    </location>
</feature>
<feature type="sequence conflict" description="In Ref. 1; BAC27862." evidence="9" ref="1">
    <original>R</original>
    <variation>Q</variation>
    <location>
        <position position="75"/>
    </location>
</feature>
<feature type="sequence conflict" description="In Ref. 2." evidence="9" ref="2">
    <original>T</original>
    <variation>D</variation>
    <location>
        <position position="472"/>
    </location>
</feature>
<proteinExistence type="evidence at protein level"/>
<protein>
    <recommendedName>
        <fullName>BCAS3 microtubule associated cell migration factor</fullName>
    </recommendedName>
    <alternativeName>
        <fullName evidence="1">Breast carcinoma-amplified sequence 3 homolog</fullName>
    </alternativeName>
    <alternativeName>
        <fullName evidence="8">K20D4</fullName>
    </alternativeName>
    <alternativeName>
        <fullName evidence="8">Protein rudhira</fullName>
    </alternativeName>
</protein>
<dbReference type="EMBL" id="AF313800">
    <property type="protein sequence ID" value="AAG34697.1"/>
    <property type="status" value="ALT_SEQ"/>
    <property type="molecule type" value="mRNA"/>
</dbReference>
<dbReference type="EMBL" id="AK032423">
    <property type="protein sequence ID" value="BAC27862.1"/>
    <property type="molecule type" value="mRNA"/>
</dbReference>
<dbReference type="EMBL" id="AK034117">
    <property type="protein sequence ID" value="BAC28592.1"/>
    <property type="molecule type" value="mRNA"/>
</dbReference>
<dbReference type="CCDS" id="CCDS25195.1">
    <molecule id="Q8CCN5-1"/>
</dbReference>
<dbReference type="RefSeq" id="NP_001160114.1">
    <property type="nucleotide sequence ID" value="NM_001166642.1"/>
</dbReference>
<dbReference type="RefSeq" id="NP_619622.3">
    <molecule id="Q8CCN5-1"/>
    <property type="nucleotide sequence ID" value="NM_138681.4"/>
</dbReference>
<dbReference type="RefSeq" id="XP_006532603.1">
    <molecule id="Q8CCN5-1"/>
    <property type="nucleotide sequence ID" value="XM_006532540.3"/>
</dbReference>
<dbReference type="BioGRID" id="228674">
    <property type="interactions" value="6"/>
</dbReference>
<dbReference type="FunCoup" id="Q8CCN5">
    <property type="interactions" value="2312"/>
</dbReference>
<dbReference type="STRING" id="10090.ENSMUSP00000074416"/>
<dbReference type="GlyGen" id="Q8CCN5">
    <property type="glycosylation" value="5 sites, 3 N-linked glycans (2 sites), 1 O-linked glycan (3 sites)"/>
</dbReference>
<dbReference type="iPTMnet" id="Q8CCN5"/>
<dbReference type="PhosphoSitePlus" id="Q8CCN5"/>
<dbReference type="SwissPalm" id="Q8CCN5"/>
<dbReference type="jPOST" id="Q8CCN5"/>
<dbReference type="PaxDb" id="10090-ENSMUSP00000103696"/>
<dbReference type="PeptideAtlas" id="Q8CCN5"/>
<dbReference type="ProteomicsDB" id="273734">
    <molecule id="Q8CCN5-1"/>
</dbReference>
<dbReference type="ProteomicsDB" id="273735">
    <molecule id="Q8CCN5-2"/>
</dbReference>
<dbReference type="Pumba" id="Q8CCN5"/>
<dbReference type="Antibodypedia" id="9303">
    <property type="antibodies" value="226 antibodies from 36 providers"/>
</dbReference>
<dbReference type="Ensembl" id="ENSMUST00000074875.11">
    <molecule id="Q8CCN5-1"/>
    <property type="protein sequence ID" value="ENSMUSP00000074416.5"/>
    <property type="gene ID" value="ENSMUSG00000059439.16"/>
</dbReference>
<dbReference type="Ensembl" id="ENSMUST00000108056.8">
    <molecule id="Q8CCN5-2"/>
    <property type="protein sequence ID" value="ENSMUSP00000103691.2"/>
    <property type="gene ID" value="ENSMUSG00000059439.16"/>
</dbReference>
<dbReference type="GeneID" id="192197"/>
<dbReference type="KEGG" id="mmu:192197"/>
<dbReference type="UCSC" id="uc007krn.2">
    <molecule id="Q8CCN5-2"/>
    <property type="organism name" value="mouse"/>
</dbReference>
<dbReference type="UCSC" id="uc007krp.2">
    <molecule id="Q8CCN5-1"/>
    <property type="organism name" value="mouse"/>
</dbReference>
<dbReference type="AGR" id="MGI:2385848"/>
<dbReference type="CTD" id="54828"/>
<dbReference type="MGI" id="MGI:2385848">
    <property type="gene designation" value="Bcas3"/>
</dbReference>
<dbReference type="VEuPathDB" id="HostDB:ENSMUSG00000059439"/>
<dbReference type="eggNOG" id="KOG2109">
    <property type="taxonomic scope" value="Eukaryota"/>
</dbReference>
<dbReference type="eggNOG" id="KOG4415">
    <property type="taxonomic scope" value="Eukaryota"/>
</dbReference>
<dbReference type="GeneTree" id="ENSGT00390000006454"/>
<dbReference type="HOGENOM" id="CLU_037675_0_0_1"/>
<dbReference type="InParanoid" id="Q8CCN5"/>
<dbReference type="BioGRID-ORCS" id="192197">
    <property type="hits" value="2 hits in 77 CRISPR screens"/>
</dbReference>
<dbReference type="CD-CODE" id="CE726F99">
    <property type="entry name" value="Postsynaptic density"/>
</dbReference>
<dbReference type="ChiTaRS" id="Bcas3">
    <property type="organism name" value="mouse"/>
</dbReference>
<dbReference type="PRO" id="PR:Q8CCN5"/>
<dbReference type="Proteomes" id="UP000000589">
    <property type="component" value="Chromosome 11"/>
</dbReference>
<dbReference type="RNAct" id="Q8CCN5">
    <property type="molecule type" value="protein"/>
</dbReference>
<dbReference type="Bgee" id="ENSMUSG00000059439">
    <property type="expression patterns" value="Expressed in seminal vesicle and 226 other cell types or tissues"/>
</dbReference>
<dbReference type="ExpressionAtlas" id="Q8CCN5">
    <property type="expression patterns" value="baseline and differential"/>
</dbReference>
<dbReference type="GO" id="GO:0031252">
    <property type="term" value="C:cell leading edge"/>
    <property type="evidence" value="ECO:0000314"/>
    <property type="project" value="UniProtKB"/>
</dbReference>
<dbReference type="GO" id="GO:0071944">
    <property type="term" value="C:cell periphery"/>
    <property type="evidence" value="ECO:0000314"/>
    <property type="project" value="MGI"/>
</dbReference>
<dbReference type="GO" id="GO:0005737">
    <property type="term" value="C:cytoplasm"/>
    <property type="evidence" value="ECO:0000314"/>
    <property type="project" value="UniProtKB"/>
</dbReference>
<dbReference type="GO" id="GO:0005881">
    <property type="term" value="C:cytoplasmic microtubule"/>
    <property type="evidence" value="ECO:0000314"/>
    <property type="project" value="UniProtKB"/>
</dbReference>
<dbReference type="GO" id="GO:0000791">
    <property type="term" value="C:euchromatin"/>
    <property type="evidence" value="ECO:0000250"/>
    <property type="project" value="UniProtKB"/>
</dbReference>
<dbReference type="GO" id="GO:0045111">
    <property type="term" value="C:intermediate filament cytoskeleton"/>
    <property type="evidence" value="ECO:0000314"/>
    <property type="project" value="UniProtKB"/>
</dbReference>
<dbReference type="GO" id="GO:0005634">
    <property type="term" value="C:nucleus"/>
    <property type="evidence" value="ECO:0000250"/>
    <property type="project" value="UniProtKB"/>
</dbReference>
<dbReference type="GO" id="GO:0000407">
    <property type="term" value="C:phagophore assembly site"/>
    <property type="evidence" value="ECO:0000250"/>
    <property type="project" value="UniProtKB"/>
</dbReference>
<dbReference type="GO" id="GO:0048487">
    <property type="term" value="F:beta-tubulin binding"/>
    <property type="evidence" value="ECO:0000250"/>
    <property type="project" value="UniProtKB"/>
</dbReference>
<dbReference type="GO" id="GO:0003682">
    <property type="term" value="F:chromatin binding"/>
    <property type="evidence" value="ECO:0000250"/>
    <property type="project" value="UniProtKB"/>
</dbReference>
<dbReference type="GO" id="GO:0035091">
    <property type="term" value="F:phosphatidylinositol binding"/>
    <property type="evidence" value="ECO:0000250"/>
    <property type="project" value="UniProtKB"/>
</dbReference>
<dbReference type="GO" id="GO:0001525">
    <property type="term" value="P:angiogenesis"/>
    <property type="evidence" value="ECO:0007669"/>
    <property type="project" value="UniProtKB-KW"/>
</dbReference>
<dbReference type="GO" id="GO:0006914">
    <property type="term" value="P:autophagy"/>
    <property type="evidence" value="ECO:0007669"/>
    <property type="project" value="InterPro"/>
</dbReference>
<dbReference type="GO" id="GO:0007267">
    <property type="term" value="P:cell-cell signaling"/>
    <property type="evidence" value="ECO:0000315"/>
    <property type="project" value="UniProtKB"/>
</dbReference>
<dbReference type="GO" id="GO:0071391">
    <property type="term" value="P:cellular response to estrogen stimulus"/>
    <property type="evidence" value="ECO:0000250"/>
    <property type="project" value="UniProtKB"/>
</dbReference>
<dbReference type="GO" id="GO:0043085">
    <property type="term" value="P:positive regulation of catalytic activity"/>
    <property type="evidence" value="ECO:0000250"/>
    <property type="project" value="UniProtKB"/>
</dbReference>
<dbReference type="GO" id="GO:0010595">
    <property type="term" value="P:positive regulation of endothelial cell migration"/>
    <property type="evidence" value="ECO:0000314"/>
    <property type="project" value="UniProtKB"/>
</dbReference>
<dbReference type="GO" id="GO:0045944">
    <property type="term" value="P:positive regulation of transcription by RNA polymerase II"/>
    <property type="evidence" value="ECO:0000250"/>
    <property type="project" value="UniProtKB"/>
</dbReference>
<dbReference type="GO" id="GO:0032956">
    <property type="term" value="P:regulation of actin cytoskeleton organization"/>
    <property type="evidence" value="ECO:0000314"/>
    <property type="project" value="UniProtKB"/>
</dbReference>
<dbReference type="FunFam" id="2.130.10.10:FF:000422">
    <property type="entry name" value="BCAS3 microtubule-associated cell migration factor"/>
    <property type="match status" value="1"/>
</dbReference>
<dbReference type="Gene3D" id="2.130.10.10">
    <property type="entry name" value="YVTN repeat-like/Quinoprotein amine dehydrogenase"/>
    <property type="match status" value="1"/>
</dbReference>
<dbReference type="InterPro" id="IPR045142">
    <property type="entry name" value="BCAS3-like"/>
</dbReference>
<dbReference type="InterPro" id="IPR022175">
    <property type="entry name" value="BCAS3_dom"/>
</dbReference>
<dbReference type="InterPro" id="IPR048382">
    <property type="entry name" value="BCAS3_WD40"/>
</dbReference>
<dbReference type="InterPro" id="IPR015943">
    <property type="entry name" value="WD40/YVTN_repeat-like_dom_sf"/>
</dbReference>
<dbReference type="InterPro" id="IPR036322">
    <property type="entry name" value="WD40_repeat_dom_sf"/>
</dbReference>
<dbReference type="PANTHER" id="PTHR13268:SF0">
    <property type="entry name" value="BCAS3 MICROTUBULE ASSOCIATED CELL MIGRATION FACTOR"/>
    <property type="match status" value="1"/>
</dbReference>
<dbReference type="PANTHER" id="PTHR13268">
    <property type="entry name" value="BREAST CARCINOMA AMPLIFIED SEQUENCE 3"/>
    <property type="match status" value="1"/>
</dbReference>
<dbReference type="Pfam" id="PF12490">
    <property type="entry name" value="BCAS3"/>
    <property type="match status" value="1"/>
</dbReference>
<dbReference type="Pfam" id="PF21034">
    <property type="entry name" value="BCAS3_WD40"/>
    <property type="match status" value="1"/>
</dbReference>
<dbReference type="SUPFAM" id="SSF50978">
    <property type="entry name" value="WD40 repeat-like"/>
    <property type="match status" value="1"/>
</dbReference>
<gene>
    <name evidence="1 11" type="primary">Bcas3</name>
</gene>
<keyword id="KW-0007">Acetylation</keyword>
<keyword id="KW-0025">Alternative splicing</keyword>
<keyword id="KW-0037">Angiogenesis</keyword>
<keyword id="KW-0963">Cytoplasm</keyword>
<keyword id="KW-0206">Cytoskeleton</keyword>
<keyword id="KW-1017">Isopeptide bond</keyword>
<keyword id="KW-0539">Nucleus</keyword>
<keyword id="KW-0597">Phosphoprotein</keyword>
<keyword id="KW-1185">Reference proteome</keyword>
<keyword id="KW-0804">Transcription</keyword>
<keyword id="KW-0805">Transcription regulation</keyword>
<keyword id="KW-0832">Ubl conjugation</keyword>
<organism>
    <name type="scientific">Mus musculus</name>
    <name type="common">Mouse</name>
    <dbReference type="NCBI Taxonomy" id="10090"/>
    <lineage>
        <taxon>Eukaryota</taxon>
        <taxon>Metazoa</taxon>
        <taxon>Chordata</taxon>
        <taxon>Craniata</taxon>
        <taxon>Vertebrata</taxon>
        <taxon>Euteleostomi</taxon>
        <taxon>Mammalia</taxon>
        <taxon>Eutheria</taxon>
        <taxon>Euarchontoglires</taxon>
        <taxon>Glires</taxon>
        <taxon>Rodentia</taxon>
        <taxon>Myomorpha</taxon>
        <taxon>Muroidea</taxon>
        <taxon>Muridae</taxon>
        <taxon>Murinae</taxon>
        <taxon>Mus</taxon>
        <taxon>Mus</taxon>
    </lineage>
</organism>
<comment type="function">
    <text evidence="1 7">Functions synergistically with PELP1 as a transcriptional coactivator of estrogen receptor-responsive genes. Stimulates histone acetyltransferase activity. Binds to chromatin (By similarity). Plays a role in angiogenesis. Participates in the regulation of cell polarity and directional endothelial cell migration by mediating both the activation and recruitment of CDC42 and the reorganization of the actin cytoskeleton at the cell leading edge. Promotes filipodia formation. Plays a regulatory role in autophagic activity. In complex with PHAF1, associates with the preautophagosomal structure during both non-selective and selective autophagy. Probably binds phosphatidylinositol 3-phosphate (PtdIns3P) which would mediate the recruitment preautophagosomal structures (By similarity).</text>
</comment>
<comment type="subunit">
    <text evidence="1">Interacts with histone H3, ESR1, KAT2B and PELP1; the interactions occur in a estrogen-dependent manner. Interacts with beta-tubulin and VIM. Interacts (via C-terminal) with PHAF1; the interaction is requrired for the association with the phagophore (By similarity).</text>
</comment>
<comment type="subcellular location">
    <subcellularLocation>
        <location evidence="1">Nucleus</location>
    </subcellularLocation>
    <subcellularLocation>
        <location evidence="3 7">Cytoplasm</location>
    </subcellularLocation>
    <subcellularLocation>
        <location evidence="7">Cytoplasm</location>
        <location evidence="7">Cytoskeleton</location>
    </subcellularLocation>
    <subcellularLocation>
        <location evidence="1">Preautophagosomal structure</location>
    </subcellularLocation>
    <text evidence="1 7">Associates with chromatin. Recruited to estrogen receptor-induced promoters in a PELP1-dependent manner (By similarity). Localizes in the cytoplasm in stationary cells. Translocates from the cytoplasm to the leading edge in motile cells. Colocalizes with microtubules and intermediate filaments in both stationary and motile cells. The BCAS3:PHAF1 complex is recruited to the preautophagosomal structures adjacent to the damaged mitochondria upon mitophagy in a PRKN-PINK1 dependent manner (By similarity).</text>
</comment>
<comment type="alternative products">
    <event type="alternative splicing"/>
    <isoform>
        <id>Q8CCN5-1</id>
        <name>1</name>
        <sequence type="displayed"/>
    </isoform>
    <isoform>
        <id>Q8CCN5-2</id>
        <name>2</name>
        <sequence type="described" ref="VSP_007861 VSP_007862"/>
    </isoform>
</comment>
<comment type="tissue specificity">
    <text evidence="3 5 6">Expressed in blood islands and yolk sac blood islands (at protein level). Highly expressed in mammary tumors. Expressed in eostrogen-induced epithelial cells of mammary glands. Expressed in brain, heart, kidney, lung, liver and spleen. Expressed in embryonic stem cells, embryoid bodies, endothelial cells and fibroblasts.</text>
</comment>
<comment type="developmental stage">
    <text evidence="3">Expressed in erythroid cells in the vessels at 9.5 and 10.5 dpc (at protein level). Expressed in embryo at 7.5 dpc and in the yolk sac at 10.5 dpc. Expressed in the heart and yolk sac mesoderm at 8.5 dpc. Expressed in the head mesenchyme, somitic mesoderm, otic vesicle, vessels and few blood cells at 9.5 to 11.5 dpc.</text>
</comment>
<comment type="induction">
    <text evidence="6">Up-regulated by PELP1 in response to estrogen.</text>
</comment>
<comment type="domain">
    <text evidence="10">Has been proposed to contain 7 WD repeats. This prediction could not be reproduced.</text>
</comment>
<comment type="miscellaneous">
    <text evidence="3">'Rudhira' stands for 'blood' in Sanskrit as this protein is strongly expressed in blood vessels.</text>
</comment>
<comment type="miscellaneous">
    <molecule>Isoform 2</molecule>
    <text evidence="9">Due to an intron retention.</text>
</comment>
<comment type="similarity">
    <text evidence="9">Belongs to the BCAS3 family.</text>
</comment>
<comment type="sequence caution" evidence="9">
    <conflict type="erroneous termination">
        <sequence resource="EMBL-CDS" id="AAG34697"/>
    </conflict>
    <text>Truncated C-terminus.</text>
</comment>
<sequence>MNETMATDSPRRPSRCTGGVVVRPQAVTEQSYMESVVTFLQDVVPQAYSGSPLTEEKEKIVWVRFENADLNDTSRNLEFHELHSTGNEPPLLVMIGYSDGMQVWGIPISGEAQELFSVRHGPVRAARILPAPQLGAQKCDNFAEKRPLLGVCKSIGSSGTTPPYCCVDLYSLRTGEMVKSIQFKTPIYDLHCNKRILVVVLQEKIAAFDSCTFTKKFFVTSCYPCPGPNMNPIALGSRWLAYAENKLIRCHQSRGGACGDNIQSYTATVLSAAKTLKSGLTMVGKVVTQLTGTLPSGVTEDDVALHCNSRRSPLVPGIITVIDTETVGEGQVLVSEDSDSDGIVAHFPAHEKPVCCMAFNTSGMLLVTTDTLGHDFHVFQILTHPWSSSQCAVHHLYTLHRGETEAKVQDICFSHDCRWVVVSTLRGTSHVFPINPYGGQPCVRTHMSPRVVNRMSRFQKSAGLEEIEQELTSKQGGRCSPVPGLSSSPSGSPLHGKLTSQDSYNNFTNNNPGNPRLSPLPSLMVVTPLAQIKQPMTLGTITKRTGPYLFGAGCFSIKAPCKVKSPPQISPSKSMGGEFCVAAVFGTSRSWFANNAGLKREKDQSKQVVVESLYIISCYGTLVEHMIEPRPISTAPKISDDTPLEIMTSPRASWTLVRTPQWNELQPPFNANHPLLLAAEAVQYYQLLLAGSLPPGSPGPITRHGSYDSLASDHSGQEDEEWLSQVEIVTHTGPHRRLWMGPQFHFKTIQTSGQTTVISTSSSVLQSHGPSDTPQPLLDFDTDDLDLNSLRIQPVRSDPVSMPGSSRAVSDRRGVSTVTDAASGTFDRSVTLLEVCGSWPEGFGLRHMSSMEHSEEGLRERLADAMAESPSRDVVGSGTELQREGSIETLSNSSGSTSGSIPRNFDGYRSPLPTNESQPLSLFPTGFP</sequence>
<evidence type="ECO:0000250" key="1">
    <source>
        <dbReference type="UniProtKB" id="Q9H6U6"/>
    </source>
</evidence>
<evidence type="ECO:0000256" key="2">
    <source>
        <dbReference type="SAM" id="MobiDB-lite"/>
    </source>
</evidence>
<evidence type="ECO:0000269" key="3">
    <source>
    </source>
</evidence>
<evidence type="ECO:0000269" key="4">
    <source>
    </source>
</evidence>
<evidence type="ECO:0000269" key="5">
    <source>
    </source>
</evidence>
<evidence type="ECO:0000269" key="6">
    <source>
    </source>
</evidence>
<evidence type="ECO:0000269" key="7">
    <source>
    </source>
</evidence>
<evidence type="ECO:0000303" key="8">
    <source>
    </source>
</evidence>
<evidence type="ECO:0000305" key="9"/>
<evidence type="ECO:0000305" key="10">
    <source>
    </source>
</evidence>
<evidence type="ECO:0000312" key="11">
    <source>
        <dbReference type="MGI" id="MGI:2385848"/>
    </source>
</evidence>
<evidence type="ECO:0007744" key="12">
    <source>
    </source>
</evidence>
<evidence type="ECO:0007744" key="13">
    <source>
    </source>
</evidence>